<feature type="chain" id="PRO_0000176749" description="Small ribosomal subunit protein bS6">
    <location>
        <begin position="1"/>
        <end position="112"/>
    </location>
</feature>
<accession>Q821W7</accession>
<evidence type="ECO:0000255" key="1">
    <source>
        <dbReference type="HAMAP-Rule" id="MF_00360"/>
    </source>
</evidence>
<evidence type="ECO:0000305" key="2"/>
<dbReference type="EMBL" id="AE015925">
    <property type="protein sequence ID" value="AAP05559.1"/>
    <property type="molecule type" value="Genomic_DNA"/>
</dbReference>
<dbReference type="RefSeq" id="WP_011006773.1">
    <property type="nucleotide sequence ID" value="NC_003361.3"/>
</dbReference>
<dbReference type="SMR" id="Q821W7"/>
<dbReference type="STRING" id="227941.CCA_00818"/>
<dbReference type="KEGG" id="cca:CCA_00818"/>
<dbReference type="eggNOG" id="COG0360">
    <property type="taxonomic scope" value="Bacteria"/>
</dbReference>
<dbReference type="HOGENOM" id="CLU_113441_5_2_0"/>
<dbReference type="OrthoDB" id="9812702at2"/>
<dbReference type="Proteomes" id="UP000002193">
    <property type="component" value="Chromosome"/>
</dbReference>
<dbReference type="GO" id="GO:0005737">
    <property type="term" value="C:cytoplasm"/>
    <property type="evidence" value="ECO:0007669"/>
    <property type="project" value="UniProtKB-ARBA"/>
</dbReference>
<dbReference type="GO" id="GO:1990904">
    <property type="term" value="C:ribonucleoprotein complex"/>
    <property type="evidence" value="ECO:0007669"/>
    <property type="project" value="UniProtKB-KW"/>
</dbReference>
<dbReference type="GO" id="GO:0005840">
    <property type="term" value="C:ribosome"/>
    <property type="evidence" value="ECO:0007669"/>
    <property type="project" value="UniProtKB-KW"/>
</dbReference>
<dbReference type="GO" id="GO:0070181">
    <property type="term" value="F:small ribosomal subunit rRNA binding"/>
    <property type="evidence" value="ECO:0007669"/>
    <property type="project" value="TreeGrafter"/>
</dbReference>
<dbReference type="GO" id="GO:0003735">
    <property type="term" value="F:structural constituent of ribosome"/>
    <property type="evidence" value="ECO:0007669"/>
    <property type="project" value="InterPro"/>
</dbReference>
<dbReference type="GO" id="GO:0006412">
    <property type="term" value="P:translation"/>
    <property type="evidence" value="ECO:0007669"/>
    <property type="project" value="UniProtKB-UniRule"/>
</dbReference>
<dbReference type="CDD" id="cd00473">
    <property type="entry name" value="bS6"/>
    <property type="match status" value="1"/>
</dbReference>
<dbReference type="Gene3D" id="3.30.70.60">
    <property type="match status" value="1"/>
</dbReference>
<dbReference type="HAMAP" id="MF_00360">
    <property type="entry name" value="Ribosomal_bS6"/>
    <property type="match status" value="1"/>
</dbReference>
<dbReference type="InterPro" id="IPR000529">
    <property type="entry name" value="Ribosomal_bS6"/>
</dbReference>
<dbReference type="InterPro" id="IPR035980">
    <property type="entry name" value="Ribosomal_bS6_sf"/>
</dbReference>
<dbReference type="InterPro" id="IPR020814">
    <property type="entry name" value="Ribosomal_S6_plastid/chlpt"/>
</dbReference>
<dbReference type="InterPro" id="IPR014717">
    <property type="entry name" value="Transl_elong_EF1B/ribsomal_bS6"/>
</dbReference>
<dbReference type="NCBIfam" id="TIGR00166">
    <property type="entry name" value="S6"/>
    <property type="match status" value="1"/>
</dbReference>
<dbReference type="PANTHER" id="PTHR21011">
    <property type="entry name" value="MITOCHONDRIAL 28S RIBOSOMAL PROTEIN S6"/>
    <property type="match status" value="1"/>
</dbReference>
<dbReference type="PANTHER" id="PTHR21011:SF1">
    <property type="entry name" value="SMALL RIBOSOMAL SUBUNIT PROTEIN BS6M"/>
    <property type="match status" value="1"/>
</dbReference>
<dbReference type="Pfam" id="PF01250">
    <property type="entry name" value="Ribosomal_S6"/>
    <property type="match status" value="1"/>
</dbReference>
<dbReference type="SUPFAM" id="SSF54995">
    <property type="entry name" value="Ribosomal protein S6"/>
    <property type="match status" value="1"/>
</dbReference>
<keyword id="KW-0687">Ribonucleoprotein</keyword>
<keyword id="KW-0689">Ribosomal protein</keyword>
<keyword id="KW-0694">RNA-binding</keyword>
<keyword id="KW-0699">rRNA-binding</keyword>
<protein>
    <recommendedName>
        <fullName evidence="1">Small ribosomal subunit protein bS6</fullName>
    </recommendedName>
    <alternativeName>
        <fullName evidence="2">30S ribosomal protein S6</fullName>
    </alternativeName>
</protein>
<comment type="function">
    <text evidence="1">Binds together with bS18 to 16S ribosomal RNA.</text>
</comment>
<comment type="similarity">
    <text evidence="1">Belongs to the bacterial ribosomal protein bS6 family.</text>
</comment>
<organism>
    <name type="scientific">Chlamydia caviae (strain ATCC VR-813 / DSM 19441 / 03DC25 / GPIC)</name>
    <name type="common">Chlamydophila caviae</name>
    <dbReference type="NCBI Taxonomy" id="227941"/>
    <lineage>
        <taxon>Bacteria</taxon>
        <taxon>Pseudomonadati</taxon>
        <taxon>Chlamydiota</taxon>
        <taxon>Chlamydiia</taxon>
        <taxon>Chlamydiales</taxon>
        <taxon>Chlamydiaceae</taxon>
        <taxon>Chlamydia/Chlamydophila group</taxon>
        <taxon>Chlamydia</taxon>
    </lineage>
</organism>
<proteinExistence type="inferred from homology"/>
<sequence length="112" mass="12895">MKEKKAQLYEGAYVFSVTLSEEARRKALEKVTSGITNYGGEILKIHDQGRKKLAYTIRGAREGYYYLIYFTVVPGVIAELWKEYHLNEDLLRFLTLKADAVKEVLEFASLPE</sequence>
<reference key="1">
    <citation type="journal article" date="2003" name="Nucleic Acids Res.">
        <title>Genome sequence of Chlamydophila caviae (Chlamydia psittaci GPIC): examining the role of niche-specific genes in the evolution of the Chlamydiaceae.</title>
        <authorList>
            <person name="Read T.D."/>
            <person name="Myers G.S.A."/>
            <person name="Brunham R.C."/>
            <person name="Nelson W.C."/>
            <person name="Paulsen I.T."/>
            <person name="Heidelberg J.F."/>
            <person name="Holtzapple E.K."/>
            <person name="Khouri H.M."/>
            <person name="Federova N.B."/>
            <person name="Carty H.A."/>
            <person name="Umayam L.A."/>
            <person name="Haft D.H."/>
            <person name="Peterson J.D."/>
            <person name="Beanan M.J."/>
            <person name="White O."/>
            <person name="Salzberg S.L."/>
            <person name="Hsia R.-C."/>
            <person name="McClarty G."/>
            <person name="Rank R.G."/>
            <person name="Bavoil P.M."/>
            <person name="Fraser C.M."/>
        </authorList>
    </citation>
    <scope>NUCLEOTIDE SEQUENCE [LARGE SCALE GENOMIC DNA]</scope>
    <source>
        <strain>ATCC VR-813 / DSM 19441 / 03DC25 / GPIC</strain>
    </source>
</reference>
<name>RS6_CHLCV</name>
<gene>
    <name evidence="1" type="primary">rpsF</name>
    <name type="ordered locus">CCA_00818</name>
</gene>